<dbReference type="EMBL" id="AY596297">
    <property type="protein sequence ID" value="AAV45901.1"/>
    <property type="molecule type" value="Genomic_DNA"/>
</dbReference>
<dbReference type="RefSeq" id="WP_004961276.1">
    <property type="nucleotide sequence ID" value="NZ_CP039138.1"/>
</dbReference>
<dbReference type="SMR" id="Q5V3K1"/>
<dbReference type="STRING" id="272569.rrnAC0927"/>
<dbReference type="PaxDb" id="272569-rrnAC0927"/>
<dbReference type="EnsemblBacteria" id="AAV45901">
    <property type="protein sequence ID" value="AAV45901"/>
    <property type="gene ID" value="rrnAC0927"/>
</dbReference>
<dbReference type="GeneID" id="64822416"/>
<dbReference type="KEGG" id="hma:rrnAC0927"/>
<dbReference type="PATRIC" id="fig|272569.17.peg.1661"/>
<dbReference type="eggNOG" id="arCOG00028">
    <property type="taxonomic scope" value="Archaea"/>
</dbReference>
<dbReference type="HOGENOM" id="CLU_111001_0_0_2"/>
<dbReference type="Proteomes" id="UP000001169">
    <property type="component" value="Chromosome I"/>
</dbReference>
<dbReference type="GO" id="GO:0003677">
    <property type="term" value="F:DNA binding"/>
    <property type="evidence" value="ECO:0007669"/>
    <property type="project" value="UniProtKB-UniRule"/>
</dbReference>
<dbReference type="GO" id="GO:0004588">
    <property type="term" value="F:orotate phosphoribosyltransferase activity"/>
    <property type="evidence" value="ECO:0007669"/>
    <property type="project" value="TreeGrafter"/>
</dbReference>
<dbReference type="GO" id="GO:0019856">
    <property type="term" value="P:pyrimidine nucleobase biosynthetic process"/>
    <property type="evidence" value="ECO:0007669"/>
    <property type="project" value="TreeGrafter"/>
</dbReference>
<dbReference type="GO" id="GO:0010468">
    <property type="term" value="P:regulation of gene expression"/>
    <property type="evidence" value="ECO:0007669"/>
    <property type="project" value="UniProtKB-UniRule"/>
</dbReference>
<dbReference type="GO" id="GO:0006222">
    <property type="term" value="P:UMP biosynthetic process"/>
    <property type="evidence" value="ECO:0007669"/>
    <property type="project" value="TreeGrafter"/>
</dbReference>
<dbReference type="CDD" id="cd06223">
    <property type="entry name" value="PRTases_typeI"/>
    <property type="match status" value="1"/>
</dbReference>
<dbReference type="Gene3D" id="3.40.50.2020">
    <property type="match status" value="1"/>
</dbReference>
<dbReference type="HAMAP" id="MF_01214">
    <property type="entry name" value="GfcR"/>
    <property type="match status" value="1"/>
</dbReference>
<dbReference type="InterPro" id="IPR053401">
    <property type="entry name" value="GcfR_halob"/>
</dbReference>
<dbReference type="InterPro" id="IPR022854">
    <property type="entry name" value="GfcR-like"/>
</dbReference>
<dbReference type="InterPro" id="IPR000836">
    <property type="entry name" value="PRibTrfase_dom"/>
</dbReference>
<dbReference type="InterPro" id="IPR029057">
    <property type="entry name" value="PRTase-like"/>
</dbReference>
<dbReference type="NCBIfam" id="NF002620">
    <property type="entry name" value="PRK02277.1"/>
    <property type="match status" value="1"/>
</dbReference>
<dbReference type="NCBIfam" id="NF045507">
    <property type="entry name" value="transregGfcR_Halo"/>
    <property type="match status" value="1"/>
</dbReference>
<dbReference type="PANTHER" id="PTHR19278">
    <property type="entry name" value="OROTATE PHOSPHORIBOSYLTRANSFERASE"/>
    <property type="match status" value="1"/>
</dbReference>
<dbReference type="PANTHER" id="PTHR19278:SF41">
    <property type="entry name" value="PYRE-LIKE PROTEIN"/>
    <property type="match status" value="1"/>
</dbReference>
<dbReference type="Pfam" id="PF00156">
    <property type="entry name" value="Pribosyltran"/>
    <property type="match status" value="1"/>
</dbReference>
<dbReference type="SUPFAM" id="SSF53271">
    <property type="entry name" value="PRTase-like"/>
    <property type="match status" value="1"/>
</dbReference>
<comment type="function">
    <text evidence="1">DNA-binding transcriptional regulator that functions as a regulator of central sugar catabolic pathways.</text>
</comment>
<comment type="domain">
    <text evidence="1">Contains an N-terminal DNA-binding winged helix-turn-helix domain and a C-terminal regulatory domain (or effector binding domain) resembling phosphoribosyltransferase (PRT) domain.</text>
</comment>
<comment type="similarity">
    <text evidence="1">Belongs to the purine/pyrimidine phosphoribosyltransferase family. GfcR subfamily.</text>
</comment>
<keyword id="KW-0238">DNA-binding</keyword>
<keyword id="KW-1185">Reference proteome</keyword>
<keyword id="KW-0804">Transcription</keyword>
<keyword id="KW-0805">Transcription regulation</keyword>
<protein>
    <recommendedName>
        <fullName evidence="1">Transcriptional regulator GfcR</fullName>
    </recommendedName>
</protein>
<name>GFCR_HALMA</name>
<sequence>MKNIDDLVDSASDLAQRGLSKGEIADELNVSRETASWLVERSGTGTEPDTSDDGGPHDIHVDWSAVGRDSNRLYHAGAAMADLLSKKGDDVDLTIGIEKAGAPLATTVARELETDLGTYAPTKHQWDDDESETSDGSFSRNFAQIRNRDCYVVDDTITSGKTMGETIDAIHEQGGNPVACVVLADKRGIGDIRGVPVYSLLQVIRVGSDGDS</sequence>
<evidence type="ECO:0000255" key="1">
    <source>
        <dbReference type="HAMAP-Rule" id="MF_01214"/>
    </source>
</evidence>
<evidence type="ECO:0000256" key="2">
    <source>
        <dbReference type="SAM" id="MobiDB-lite"/>
    </source>
</evidence>
<evidence type="ECO:0000312" key="3">
    <source>
        <dbReference type="EMBL" id="AAV45901.1"/>
    </source>
</evidence>
<accession>Q5V3K1</accession>
<proteinExistence type="inferred from homology"/>
<reference key="1">
    <citation type="journal article" date="2004" name="Genome Res.">
        <title>Genome sequence of Haloarcula marismortui: a halophilic archaeon from the Dead Sea.</title>
        <authorList>
            <person name="Baliga N.S."/>
            <person name="Bonneau R."/>
            <person name="Facciotti M.T."/>
            <person name="Pan M."/>
            <person name="Glusman G."/>
            <person name="Deutsch E.W."/>
            <person name="Shannon P."/>
            <person name="Chiu Y."/>
            <person name="Weng R.S."/>
            <person name="Gan R.R."/>
            <person name="Hung P."/>
            <person name="Date S.V."/>
            <person name="Marcotte E."/>
            <person name="Hood L."/>
            <person name="Ng W.V."/>
        </authorList>
    </citation>
    <scope>NUCLEOTIDE SEQUENCE [LARGE SCALE GENOMIC DNA]</scope>
    <source>
        <strain>ATCC 43049 / DSM 3752 / JCM 8966 / VKM B-1809</strain>
    </source>
</reference>
<gene>
    <name evidence="1" type="primary">gfcR</name>
    <name evidence="3" type="synonym">pyrE2</name>
    <name type="ordered locus">rrnAC0927</name>
</gene>
<feature type="chain" id="PRO_0000298893" description="Transcriptional regulator GfcR">
    <location>
        <begin position="1"/>
        <end position="212"/>
    </location>
</feature>
<feature type="region of interest" description="Disordered" evidence="2">
    <location>
        <begin position="38"/>
        <end position="60"/>
    </location>
</feature>
<organism>
    <name type="scientific">Haloarcula marismortui (strain ATCC 43049 / DSM 3752 / JCM 8966 / VKM B-1809)</name>
    <name type="common">Halobacterium marismortui</name>
    <dbReference type="NCBI Taxonomy" id="272569"/>
    <lineage>
        <taxon>Archaea</taxon>
        <taxon>Methanobacteriati</taxon>
        <taxon>Methanobacteriota</taxon>
        <taxon>Stenosarchaea group</taxon>
        <taxon>Halobacteria</taxon>
        <taxon>Halobacteriales</taxon>
        <taxon>Haloarculaceae</taxon>
        <taxon>Haloarcula</taxon>
    </lineage>
</organism>